<keyword id="KW-0004">4Fe-4S</keyword>
<keyword id="KW-0408">Iron</keyword>
<keyword id="KW-0411">Iron-sulfur</keyword>
<keyword id="KW-0414">Isoprene biosynthesis</keyword>
<keyword id="KW-0479">Metal-binding</keyword>
<keyword id="KW-0560">Oxidoreductase</keyword>
<dbReference type="EC" id="1.17.7.4" evidence="1"/>
<dbReference type="EMBL" id="CP000094">
    <property type="protein sequence ID" value="ABA76586.1"/>
    <property type="molecule type" value="Genomic_DNA"/>
</dbReference>
<dbReference type="RefSeq" id="WP_011336003.1">
    <property type="nucleotide sequence ID" value="NC_007492.2"/>
</dbReference>
<dbReference type="SMR" id="Q3K6L8"/>
<dbReference type="KEGG" id="pfo:Pfl01_4849"/>
<dbReference type="eggNOG" id="COG0761">
    <property type="taxonomic scope" value="Bacteria"/>
</dbReference>
<dbReference type="HOGENOM" id="CLU_027486_1_1_6"/>
<dbReference type="UniPathway" id="UPA00056">
    <property type="reaction ID" value="UER00097"/>
</dbReference>
<dbReference type="UniPathway" id="UPA00059">
    <property type="reaction ID" value="UER00105"/>
</dbReference>
<dbReference type="Proteomes" id="UP000002704">
    <property type="component" value="Chromosome"/>
</dbReference>
<dbReference type="GO" id="GO:0051539">
    <property type="term" value="F:4 iron, 4 sulfur cluster binding"/>
    <property type="evidence" value="ECO:0007669"/>
    <property type="project" value="UniProtKB-UniRule"/>
</dbReference>
<dbReference type="GO" id="GO:0051745">
    <property type="term" value="F:4-hydroxy-3-methylbut-2-enyl diphosphate reductase activity"/>
    <property type="evidence" value="ECO:0007669"/>
    <property type="project" value="UniProtKB-UniRule"/>
</dbReference>
<dbReference type="GO" id="GO:0046872">
    <property type="term" value="F:metal ion binding"/>
    <property type="evidence" value="ECO:0007669"/>
    <property type="project" value="UniProtKB-KW"/>
</dbReference>
<dbReference type="GO" id="GO:0050992">
    <property type="term" value="P:dimethylallyl diphosphate biosynthetic process"/>
    <property type="evidence" value="ECO:0007669"/>
    <property type="project" value="UniProtKB-UniRule"/>
</dbReference>
<dbReference type="GO" id="GO:0019288">
    <property type="term" value="P:isopentenyl diphosphate biosynthetic process, methylerythritol 4-phosphate pathway"/>
    <property type="evidence" value="ECO:0007669"/>
    <property type="project" value="UniProtKB-UniRule"/>
</dbReference>
<dbReference type="GO" id="GO:0016114">
    <property type="term" value="P:terpenoid biosynthetic process"/>
    <property type="evidence" value="ECO:0007669"/>
    <property type="project" value="UniProtKB-UniRule"/>
</dbReference>
<dbReference type="CDD" id="cd13944">
    <property type="entry name" value="lytB_ispH"/>
    <property type="match status" value="1"/>
</dbReference>
<dbReference type="Gene3D" id="3.40.50.11270">
    <property type="match status" value="1"/>
</dbReference>
<dbReference type="Gene3D" id="3.40.1010.20">
    <property type="entry name" value="4-hydroxy-3-methylbut-2-enyl diphosphate reductase, catalytic domain"/>
    <property type="match status" value="2"/>
</dbReference>
<dbReference type="HAMAP" id="MF_00191">
    <property type="entry name" value="IspH"/>
    <property type="match status" value="1"/>
</dbReference>
<dbReference type="InterPro" id="IPR003451">
    <property type="entry name" value="LytB/IspH"/>
</dbReference>
<dbReference type="NCBIfam" id="TIGR00216">
    <property type="entry name" value="ispH_lytB"/>
    <property type="match status" value="1"/>
</dbReference>
<dbReference type="NCBIfam" id="NF002188">
    <property type="entry name" value="PRK01045.1-2"/>
    <property type="match status" value="1"/>
</dbReference>
<dbReference type="NCBIfam" id="NF002190">
    <property type="entry name" value="PRK01045.1-4"/>
    <property type="match status" value="1"/>
</dbReference>
<dbReference type="PANTHER" id="PTHR30426">
    <property type="entry name" value="4-HYDROXY-3-METHYLBUT-2-ENYL DIPHOSPHATE REDUCTASE"/>
    <property type="match status" value="1"/>
</dbReference>
<dbReference type="PANTHER" id="PTHR30426:SF0">
    <property type="entry name" value="4-HYDROXY-3-METHYLBUT-2-ENYL DIPHOSPHATE REDUCTASE"/>
    <property type="match status" value="1"/>
</dbReference>
<dbReference type="Pfam" id="PF02401">
    <property type="entry name" value="LYTB"/>
    <property type="match status" value="1"/>
</dbReference>
<organism>
    <name type="scientific">Pseudomonas fluorescens (strain Pf0-1)</name>
    <dbReference type="NCBI Taxonomy" id="205922"/>
    <lineage>
        <taxon>Bacteria</taxon>
        <taxon>Pseudomonadati</taxon>
        <taxon>Pseudomonadota</taxon>
        <taxon>Gammaproteobacteria</taxon>
        <taxon>Pseudomonadales</taxon>
        <taxon>Pseudomonadaceae</taxon>
        <taxon>Pseudomonas</taxon>
    </lineage>
</organism>
<feature type="chain" id="PRO_1000021165" description="4-hydroxy-3-methylbut-2-enyl diphosphate reductase">
    <location>
        <begin position="1"/>
        <end position="314"/>
    </location>
</feature>
<feature type="active site" description="Proton donor" evidence="1">
    <location>
        <position position="126"/>
    </location>
</feature>
<feature type="binding site" evidence="1">
    <location>
        <position position="12"/>
    </location>
    <ligand>
        <name>[4Fe-4S] cluster</name>
        <dbReference type="ChEBI" id="CHEBI:49883"/>
    </ligand>
</feature>
<feature type="binding site" evidence="1">
    <location>
        <position position="41"/>
    </location>
    <ligand>
        <name>(2E)-4-hydroxy-3-methylbut-2-enyl diphosphate</name>
        <dbReference type="ChEBI" id="CHEBI:128753"/>
    </ligand>
</feature>
<feature type="binding site" evidence="1">
    <location>
        <position position="41"/>
    </location>
    <ligand>
        <name>dimethylallyl diphosphate</name>
        <dbReference type="ChEBI" id="CHEBI:57623"/>
    </ligand>
</feature>
<feature type="binding site" evidence="1">
    <location>
        <position position="41"/>
    </location>
    <ligand>
        <name>isopentenyl diphosphate</name>
        <dbReference type="ChEBI" id="CHEBI:128769"/>
    </ligand>
</feature>
<feature type="binding site" evidence="1">
    <location>
        <position position="74"/>
    </location>
    <ligand>
        <name>(2E)-4-hydroxy-3-methylbut-2-enyl diphosphate</name>
        <dbReference type="ChEBI" id="CHEBI:128753"/>
    </ligand>
</feature>
<feature type="binding site" evidence="1">
    <location>
        <position position="74"/>
    </location>
    <ligand>
        <name>dimethylallyl diphosphate</name>
        <dbReference type="ChEBI" id="CHEBI:57623"/>
    </ligand>
</feature>
<feature type="binding site" evidence="1">
    <location>
        <position position="74"/>
    </location>
    <ligand>
        <name>isopentenyl diphosphate</name>
        <dbReference type="ChEBI" id="CHEBI:128769"/>
    </ligand>
</feature>
<feature type="binding site" evidence="1">
    <location>
        <position position="96"/>
    </location>
    <ligand>
        <name>[4Fe-4S] cluster</name>
        <dbReference type="ChEBI" id="CHEBI:49883"/>
    </ligand>
</feature>
<feature type="binding site" evidence="1">
    <location>
        <position position="124"/>
    </location>
    <ligand>
        <name>(2E)-4-hydroxy-3-methylbut-2-enyl diphosphate</name>
        <dbReference type="ChEBI" id="CHEBI:128753"/>
    </ligand>
</feature>
<feature type="binding site" evidence="1">
    <location>
        <position position="124"/>
    </location>
    <ligand>
        <name>dimethylallyl diphosphate</name>
        <dbReference type="ChEBI" id="CHEBI:57623"/>
    </ligand>
</feature>
<feature type="binding site" evidence="1">
    <location>
        <position position="124"/>
    </location>
    <ligand>
        <name>isopentenyl diphosphate</name>
        <dbReference type="ChEBI" id="CHEBI:128769"/>
    </ligand>
</feature>
<feature type="binding site" evidence="1">
    <location>
        <position position="168"/>
    </location>
    <ligand>
        <name>(2E)-4-hydroxy-3-methylbut-2-enyl diphosphate</name>
        <dbReference type="ChEBI" id="CHEBI:128753"/>
    </ligand>
</feature>
<feature type="binding site" evidence="1">
    <location>
        <position position="198"/>
    </location>
    <ligand>
        <name>[4Fe-4S] cluster</name>
        <dbReference type="ChEBI" id="CHEBI:49883"/>
    </ligand>
</feature>
<feature type="binding site" evidence="1">
    <location>
        <position position="226"/>
    </location>
    <ligand>
        <name>(2E)-4-hydroxy-3-methylbut-2-enyl diphosphate</name>
        <dbReference type="ChEBI" id="CHEBI:128753"/>
    </ligand>
</feature>
<feature type="binding site" evidence="1">
    <location>
        <position position="226"/>
    </location>
    <ligand>
        <name>dimethylallyl diphosphate</name>
        <dbReference type="ChEBI" id="CHEBI:57623"/>
    </ligand>
</feature>
<feature type="binding site" evidence="1">
    <location>
        <position position="226"/>
    </location>
    <ligand>
        <name>isopentenyl diphosphate</name>
        <dbReference type="ChEBI" id="CHEBI:128769"/>
    </ligand>
</feature>
<feature type="binding site" evidence="1">
    <location>
        <position position="227"/>
    </location>
    <ligand>
        <name>(2E)-4-hydroxy-3-methylbut-2-enyl diphosphate</name>
        <dbReference type="ChEBI" id="CHEBI:128753"/>
    </ligand>
</feature>
<feature type="binding site" evidence="1">
    <location>
        <position position="227"/>
    </location>
    <ligand>
        <name>dimethylallyl diphosphate</name>
        <dbReference type="ChEBI" id="CHEBI:57623"/>
    </ligand>
</feature>
<feature type="binding site" evidence="1">
    <location>
        <position position="227"/>
    </location>
    <ligand>
        <name>isopentenyl diphosphate</name>
        <dbReference type="ChEBI" id="CHEBI:128769"/>
    </ligand>
</feature>
<feature type="binding site" evidence="1">
    <location>
        <position position="228"/>
    </location>
    <ligand>
        <name>(2E)-4-hydroxy-3-methylbut-2-enyl diphosphate</name>
        <dbReference type="ChEBI" id="CHEBI:128753"/>
    </ligand>
</feature>
<feature type="binding site" evidence="1">
    <location>
        <position position="228"/>
    </location>
    <ligand>
        <name>dimethylallyl diphosphate</name>
        <dbReference type="ChEBI" id="CHEBI:57623"/>
    </ligand>
</feature>
<feature type="binding site" evidence="1">
    <location>
        <position position="228"/>
    </location>
    <ligand>
        <name>isopentenyl diphosphate</name>
        <dbReference type="ChEBI" id="CHEBI:128769"/>
    </ligand>
</feature>
<feature type="binding site" evidence="1">
    <location>
        <position position="270"/>
    </location>
    <ligand>
        <name>(2E)-4-hydroxy-3-methylbut-2-enyl diphosphate</name>
        <dbReference type="ChEBI" id="CHEBI:128753"/>
    </ligand>
</feature>
<feature type="binding site" evidence="1">
    <location>
        <position position="270"/>
    </location>
    <ligand>
        <name>dimethylallyl diphosphate</name>
        <dbReference type="ChEBI" id="CHEBI:57623"/>
    </ligand>
</feature>
<feature type="binding site" evidence="1">
    <location>
        <position position="270"/>
    </location>
    <ligand>
        <name>isopentenyl diphosphate</name>
        <dbReference type="ChEBI" id="CHEBI:128769"/>
    </ligand>
</feature>
<proteinExistence type="inferred from homology"/>
<accession>Q3K6L8</accession>
<evidence type="ECO:0000255" key="1">
    <source>
        <dbReference type="HAMAP-Rule" id="MF_00191"/>
    </source>
</evidence>
<protein>
    <recommendedName>
        <fullName evidence="1">4-hydroxy-3-methylbut-2-enyl diphosphate reductase</fullName>
        <shortName evidence="1">HMBPP reductase</shortName>
        <ecNumber evidence="1">1.17.7.4</ecNumber>
    </recommendedName>
</protein>
<reference key="1">
    <citation type="journal article" date="2009" name="Genome Biol.">
        <title>Genomic and genetic analyses of diversity and plant interactions of Pseudomonas fluorescens.</title>
        <authorList>
            <person name="Silby M.W."/>
            <person name="Cerdeno-Tarraga A.M."/>
            <person name="Vernikos G.S."/>
            <person name="Giddens S.R."/>
            <person name="Jackson R.W."/>
            <person name="Preston G.M."/>
            <person name="Zhang X.-X."/>
            <person name="Moon C.D."/>
            <person name="Gehrig S.M."/>
            <person name="Godfrey S.A.C."/>
            <person name="Knight C.G."/>
            <person name="Malone J.G."/>
            <person name="Robinson Z."/>
            <person name="Spiers A.J."/>
            <person name="Harris S."/>
            <person name="Challis G.L."/>
            <person name="Yaxley A.M."/>
            <person name="Harris D."/>
            <person name="Seeger K."/>
            <person name="Murphy L."/>
            <person name="Rutter S."/>
            <person name="Squares R."/>
            <person name="Quail M.A."/>
            <person name="Saunders E."/>
            <person name="Mavromatis K."/>
            <person name="Brettin T.S."/>
            <person name="Bentley S.D."/>
            <person name="Hothersall J."/>
            <person name="Stephens E."/>
            <person name="Thomas C.M."/>
            <person name="Parkhill J."/>
            <person name="Levy S.B."/>
            <person name="Rainey P.B."/>
            <person name="Thomson N.R."/>
        </authorList>
    </citation>
    <scope>NUCLEOTIDE SEQUENCE [LARGE SCALE GENOMIC DNA]</scope>
    <source>
        <strain>Pf0-1</strain>
    </source>
</reference>
<comment type="function">
    <text evidence="1">Catalyzes the conversion of 1-hydroxy-2-methyl-2-(E)-butenyl 4-diphosphate (HMBPP) into a mixture of isopentenyl diphosphate (IPP) and dimethylallyl diphosphate (DMAPP). Acts in the terminal step of the DOXP/MEP pathway for isoprenoid precursor biosynthesis.</text>
</comment>
<comment type="catalytic activity">
    <reaction evidence="1">
        <text>isopentenyl diphosphate + 2 oxidized [2Fe-2S]-[ferredoxin] + H2O = (2E)-4-hydroxy-3-methylbut-2-enyl diphosphate + 2 reduced [2Fe-2S]-[ferredoxin] + 2 H(+)</text>
        <dbReference type="Rhea" id="RHEA:24488"/>
        <dbReference type="Rhea" id="RHEA-COMP:10000"/>
        <dbReference type="Rhea" id="RHEA-COMP:10001"/>
        <dbReference type="ChEBI" id="CHEBI:15377"/>
        <dbReference type="ChEBI" id="CHEBI:15378"/>
        <dbReference type="ChEBI" id="CHEBI:33737"/>
        <dbReference type="ChEBI" id="CHEBI:33738"/>
        <dbReference type="ChEBI" id="CHEBI:128753"/>
        <dbReference type="ChEBI" id="CHEBI:128769"/>
        <dbReference type="EC" id="1.17.7.4"/>
    </reaction>
</comment>
<comment type="catalytic activity">
    <reaction evidence="1">
        <text>dimethylallyl diphosphate + 2 oxidized [2Fe-2S]-[ferredoxin] + H2O = (2E)-4-hydroxy-3-methylbut-2-enyl diphosphate + 2 reduced [2Fe-2S]-[ferredoxin] + 2 H(+)</text>
        <dbReference type="Rhea" id="RHEA:24825"/>
        <dbReference type="Rhea" id="RHEA-COMP:10000"/>
        <dbReference type="Rhea" id="RHEA-COMP:10001"/>
        <dbReference type="ChEBI" id="CHEBI:15377"/>
        <dbReference type="ChEBI" id="CHEBI:15378"/>
        <dbReference type="ChEBI" id="CHEBI:33737"/>
        <dbReference type="ChEBI" id="CHEBI:33738"/>
        <dbReference type="ChEBI" id="CHEBI:57623"/>
        <dbReference type="ChEBI" id="CHEBI:128753"/>
        <dbReference type="EC" id="1.17.7.4"/>
    </reaction>
</comment>
<comment type="cofactor">
    <cofactor evidence="1">
        <name>[4Fe-4S] cluster</name>
        <dbReference type="ChEBI" id="CHEBI:49883"/>
    </cofactor>
    <text evidence="1">Binds 1 [4Fe-4S] cluster per subunit.</text>
</comment>
<comment type="pathway">
    <text evidence="1">Isoprenoid biosynthesis; dimethylallyl diphosphate biosynthesis; dimethylallyl diphosphate from (2E)-4-hydroxy-3-methylbutenyl diphosphate: step 1/1.</text>
</comment>
<comment type="pathway">
    <text evidence="1">Isoprenoid biosynthesis; isopentenyl diphosphate biosynthesis via DXP pathway; isopentenyl diphosphate from 1-deoxy-D-xylulose 5-phosphate: step 6/6.</text>
</comment>
<comment type="similarity">
    <text evidence="1">Belongs to the IspH family.</text>
</comment>
<gene>
    <name evidence="1" type="primary">ispH</name>
    <name type="ordered locus">Pfl01_4849</name>
</gene>
<name>ISPH_PSEPF</name>
<sequence length="314" mass="34362">MQIKLANPRGFCAGVDRAIEIVNRALEVFGPPIYVRHEVVHNKFVVEDLRIRGAIFVEELDQVPDDVIVIFSAHGVSQAVRTEAAGRGLKVFDATCPLVTKVHIEVAKYSRDGRECILIGHAGHPEVEGTMGQYDASNGGAIYLVEDEKDVAELQVHNPDKLAFVTQTTLSMDDTSRVIDALRTRFPAIGGPRKDDICYATQNRQDAVKQLADECDVVLVVGSPNSSNSNRLRELAERMATPAYLIDGAEDLQKSWFDGVERIGITAGASAPEVLVRGVIQQLQAWGATGADELAGREENITFSMPKELRVRSI</sequence>